<dbReference type="EMBL" id="BC162416">
    <property type="protein sequence ID" value="AAI62416.1"/>
    <property type="molecule type" value="mRNA"/>
</dbReference>
<dbReference type="EMBL" id="BC162419">
    <property type="protein sequence ID" value="AAI62419.1"/>
    <property type="molecule type" value="mRNA"/>
</dbReference>
<dbReference type="RefSeq" id="NP_001154965.1">
    <property type="nucleotide sequence ID" value="NM_001161493.1"/>
</dbReference>
<dbReference type="FunCoup" id="B3DGJ2">
    <property type="interactions" value="121"/>
</dbReference>
<dbReference type="GeneID" id="100170803"/>
<dbReference type="KEGG" id="dre:100170803"/>
<dbReference type="AGR" id="ZFIN:ZDB-GENE-041210-161"/>
<dbReference type="ZFIN" id="ZDB-GENE-041210-161">
    <property type="gene designation" value="si:dkey-261e22.4"/>
</dbReference>
<dbReference type="InParanoid" id="B3DGJ2"/>
<dbReference type="OrthoDB" id="8909183at2759"/>
<dbReference type="PhylomeDB" id="B3DGJ2"/>
<dbReference type="PRO" id="PR:B3DGJ2"/>
<dbReference type="Proteomes" id="UP000000437">
    <property type="component" value="Chromosome 4"/>
</dbReference>
<dbReference type="InterPro" id="IPR029133">
    <property type="entry name" value="OCC1"/>
</dbReference>
<dbReference type="PANTHER" id="PTHR38502">
    <property type="entry name" value="OVEREXPRESSED IN COLON CARCINOMA 1 PROTEIN"/>
    <property type="match status" value="1"/>
</dbReference>
<dbReference type="PANTHER" id="PTHR38502:SF1">
    <property type="entry name" value="OVEREXPRESSED IN COLON CARCINOMA 1 PROTEIN"/>
    <property type="match status" value="1"/>
</dbReference>
<dbReference type="Pfam" id="PF15506">
    <property type="entry name" value="OCC1"/>
    <property type="match status" value="1"/>
</dbReference>
<sequence>MGCGNSTAASTTPGPAESAKDVQDDSSMDEEKRRNYGGVYVGIPADLTNETAGQTASTHKE</sequence>
<comment type="similarity">
    <text evidence="2">Belongs to the OCC1 family.</text>
</comment>
<gene>
    <name type="primary">si:dkey-261e22.4</name>
</gene>
<keyword id="KW-1185">Reference proteome</keyword>
<organism>
    <name type="scientific">Danio rerio</name>
    <name type="common">Zebrafish</name>
    <name type="synonym">Brachydanio rerio</name>
    <dbReference type="NCBI Taxonomy" id="7955"/>
    <lineage>
        <taxon>Eukaryota</taxon>
        <taxon>Metazoa</taxon>
        <taxon>Chordata</taxon>
        <taxon>Craniata</taxon>
        <taxon>Vertebrata</taxon>
        <taxon>Euteleostomi</taxon>
        <taxon>Actinopterygii</taxon>
        <taxon>Neopterygii</taxon>
        <taxon>Teleostei</taxon>
        <taxon>Ostariophysi</taxon>
        <taxon>Cypriniformes</taxon>
        <taxon>Danionidae</taxon>
        <taxon>Danioninae</taxon>
        <taxon>Danio</taxon>
    </lineage>
</organism>
<name>OCC1_DANRE</name>
<proteinExistence type="inferred from homology"/>
<accession>B3DGJ2</accession>
<reference key="1">
    <citation type="submission" date="2008-04" db="EMBL/GenBank/DDBJ databases">
        <authorList>
            <consortium name="NIH - Zebrafish Gene Collection (ZGC) project"/>
        </authorList>
    </citation>
    <scope>NUCLEOTIDE SEQUENCE [LARGE SCALE MRNA]</scope>
</reference>
<feature type="chain" id="PRO_0000368225" description="Overexpressed in colon carcinoma 1 protein homolog">
    <location>
        <begin position="1"/>
        <end position="61"/>
    </location>
</feature>
<feature type="region of interest" description="Disordered" evidence="1">
    <location>
        <begin position="1"/>
        <end position="61"/>
    </location>
</feature>
<feature type="compositionally biased region" description="Polar residues" evidence="1">
    <location>
        <begin position="1"/>
        <end position="13"/>
    </location>
</feature>
<feature type="compositionally biased region" description="Basic and acidic residues" evidence="1">
    <location>
        <begin position="18"/>
        <end position="34"/>
    </location>
</feature>
<feature type="compositionally biased region" description="Polar residues" evidence="1">
    <location>
        <begin position="48"/>
        <end position="61"/>
    </location>
</feature>
<protein>
    <recommendedName>
        <fullName>Overexpressed in colon carcinoma 1 protein homolog</fullName>
        <shortName>OCC-1</shortName>
    </recommendedName>
</protein>
<evidence type="ECO:0000256" key="1">
    <source>
        <dbReference type="SAM" id="MobiDB-lite"/>
    </source>
</evidence>
<evidence type="ECO:0000305" key="2"/>